<feature type="chain" id="PRO_0000336271" description="UPF0102 protein STH1475">
    <location>
        <begin position="1"/>
        <end position="118"/>
    </location>
</feature>
<dbReference type="EMBL" id="AP006840">
    <property type="protein sequence ID" value="BAD40460.1"/>
    <property type="molecule type" value="Genomic_DNA"/>
</dbReference>
<dbReference type="RefSeq" id="WP_011195605.1">
    <property type="nucleotide sequence ID" value="NC_006177.1"/>
</dbReference>
<dbReference type="SMR" id="Q67PD3"/>
<dbReference type="STRING" id="292459.STH1475"/>
<dbReference type="KEGG" id="sth:STH1475"/>
<dbReference type="eggNOG" id="COG0792">
    <property type="taxonomic scope" value="Bacteria"/>
</dbReference>
<dbReference type="HOGENOM" id="CLU_115353_2_3_9"/>
<dbReference type="OrthoDB" id="9802516at2"/>
<dbReference type="Proteomes" id="UP000000417">
    <property type="component" value="Chromosome"/>
</dbReference>
<dbReference type="GO" id="GO:0003676">
    <property type="term" value="F:nucleic acid binding"/>
    <property type="evidence" value="ECO:0007669"/>
    <property type="project" value="InterPro"/>
</dbReference>
<dbReference type="CDD" id="cd20736">
    <property type="entry name" value="PoNe_Nuclease"/>
    <property type="match status" value="1"/>
</dbReference>
<dbReference type="Gene3D" id="3.40.1350.10">
    <property type="match status" value="1"/>
</dbReference>
<dbReference type="HAMAP" id="MF_00048">
    <property type="entry name" value="UPF0102"/>
    <property type="match status" value="1"/>
</dbReference>
<dbReference type="InterPro" id="IPR011335">
    <property type="entry name" value="Restrct_endonuc-II-like"/>
</dbReference>
<dbReference type="InterPro" id="IPR011856">
    <property type="entry name" value="tRNA_endonuc-like_dom_sf"/>
</dbReference>
<dbReference type="InterPro" id="IPR003509">
    <property type="entry name" value="UPF0102_YraN-like"/>
</dbReference>
<dbReference type="NCBIfam" id="NF009150">
    <property type="entry name" value="PRK12497.1-3"/>
    <property type="match status" value="1"/>
</dbReference>
<dbReference type="NCBIfam" id="NF009154">
    <property type="entry name" value="PRK12497.3-3"/>
    <property type="match status" value="1"/>
</dbReference>
<dbReference type="NCBIfam" id="TIGR00252">
    <property type="entry name" value="YraN family protein"/>
    <property type="match status" value="1"/>
</dbReference>
<dbReference type="PANTHER" id="PTHR34039">
    <property type="entry name" value="UPF0102 PROTEIN YRAN"/>
    <property type="match status" value="1"/>
</dbReference>
<dbReference type="PANTHER" id="PTHR34039:SF1">
    <property type="entry name" value="UPF0102 PROTEIN YRAN"/>
    <property type="match status" value="1"/>
</dbReference>
<dbReference type="Pfam" id="PF02021">
    <property type="entry name" value="UPF0102"/>
    <property type="match status" value="1"/>
</dbReference>
<dbReference type="SUPFAM" id="SSF52980">
    <property type="entry name" value="Restriction endonuclease-like"/>
    <property type="match status" value="1"/>
</dbReference>
<evidence type="ECO:0000255" key="1">
    <source>
        <dbReference type="HAMAP-Rule" id="MF_00048"/>
    </source>
</evidence>
<keyword id="KW-1185">Reference proteome</keyword>
<comment type="similarity">
    <text evidence="1">Belongs to the UPF0102 family.</text>
</comment>
<accession>Q67PD3</accession>
<proteinExistence type="inferred from homology"/>
<sequence>MSRRVGEAGEQAAAEFLTASGYRIIARNVRFRSGEIDLIAQDGGVLVFVEVKTRRGRRYGTPGEAVTAAKQRRLARLASLYLARLGSEPPPCRFDVVEVEPGPDGRLRCRLIQNAFHA</sequence>
<protein>
    <recommendedName>
        <fullName evidence="1">UPF0102 protein STH1475</fullName>
    </recommendedName>
</protein>
<reference key="1">
    <citation type="journal article" date="2004" name="Nucleic Acids Res.">
        <title>Genome sequence of Symbiobacterium thermophilum, an uncultivable bacterium that depends on microbial commensalism.</title>
        <authorList>
            <person name="Ueda K."/>
            <person name="Yamashita A."/>
            <person name="Ishikawa J."/>
            <person name="Shimada M."/>
            <person name="Watsuji T."/>
            <person name="Morimura K."/>
            <person name="Ikeda H."/>
            <person name="Hattori M."/>
            <person name="Beppu T."/>
        </authorList>
    </citation>
    <scope>NUCLEOTIDE SEQUENCE [LARGE SCALE GENOMIC DNA]</scope>
    <source>
        <strain>DSM 24528 / JCM 14929 / IAM 14863 / T</strain>
    </source>
</reference>
<name>Y1475_SYMTH</name>
<organism>
    <name type="scientific">Symbiobacterium thermophilum (strain DSM 24528 / JCM 14929 / IAM 14863 / T)</name>
    <dbReference type="NCBI Taxonomy" id="292459"/>
    <lineage>
        <taxon>Bacteria</taxon>
        <taxon>Bacillati</taxon>
        <taxon>Bacillota</taxon>
        <taxon>Clostridia</taxon>
        <taxon>Eubacteriales</taxon>
        <taxon>Symbiobacteriaceae</taxon>
        <taxon>Symbiobacterium</taxon>
    </lineage>
</organism>
<gene>
    <name type="ordered locus">STH1475</name>
</gene>